<gene>
    <name evidence="1" type="primary">darP</name>
    <name type="ordered locus">CGSHiGG_09420</name>
</gene>
<sequence>MAKRKKKEVFDWEDEDQEEIIWVSKSEIKRDAEDLKQLGEKIVNLTKANLAKIPLDESLLDAIELAQRLQKEARRRQLQYIGKLFRGIDVEPIREALDKIENKHNQQQAMLHKIEKVRDELVEKGDVALTDLLNDYPNGDRQQLRNLIRSAQKELEQNKPSKAYREIYQMLKVLMLED</sequence>
<protein>
    <recommendedName>
        <fullName evidence="1">Dual-action ribosomal maturation protein DarP</fullName>
    </recommendedName>
    <alternativeName>
        <fullName evidence="1">Large ribosomal subunit assembly factor DarP</fullName>
    </alternativeName>
</protein>
<keyword id="KW-0963">Cytoplasm</keyword>
<keyword id="KW-0690">Ribosome biogenesis</keyword>
<keyword id="KW-0694">RNA-binding</keyword>
<keyword id="KW-0699">rRNA-binding</keyword>
<proteinExistence type="inferred from homology"/>
<evidence type="ECO:0000255" key="1">
    <source>
        <dbReference type="HAMAP-Rule" id="MF_00765"/>
    </source>
</evidence>
<comment type="function">
    <text evidence="1">Member of a network of 50S ribosomal subunit biogenesis factors which assembles along the 30S-50S interface, preventing incorrect 23S rRNA structures from forming. Promotes peptidyl transferase center (PTC) maturation.</text>
</comment>
<comment type="subcellular location">
    <subcellularLocation>
        <location evidence="1">Cytoplasm</location>
    </subcellularLocation>
    <text evidence="1">Associates with late stage pre-50S ribosomal subunits.</text>
</comment>
<comment type="similarity">
    <text evidence="1">Belongs to the DarP family.</text>
</comment>
<reference key="1">
    <citation type="journal article" date="2007" name="Genome Biol.">
        <title>Characterization and modeling of the Haemophilus influenzae core and supragenomes based on the complete genomic sequences of Rd and 12 clinical nontypeable strains.</title>
        <authorList>
            <person name="Hogg J.S."/>
            <person name="Hu F.Z."/>
            <person name="Janto B."/>
            <person name="Boissy R."/>
            <person name="Hayes J."/>
            <person name="Keefe R."/>
            <person name="Post J.C."/>
            <person name="Ehrlich G.D."/>
        </authorList>
    </citation>
    <scope>NUCLEOTIDE SEQUENCE [LARGE SCALE GENOMIC DNA]</scope>
    <source>
        <strain>PittGG</strain>
    </source>
</reference>
<feature type="chain" id="PRO_1000046799" description="Dual-action ribosomal maturation protein DarP">
    <location>
        <begin position="1"/>
        <end position="178"/>
    </location>
</feature>
<accession>A5UIS4</accession>
<name>DARP_HAEIG</name>
<dbReference type="EMBL" id="CP000672">
    <property type="protein sequence ID" value="ABR00680.1"/>
    <property type="molecule type" value="Genomic_DNA"/>
</dbReference>
<dbReference type="SMR" id="A5UIS4"/>
<dbReference type="KEGG" id="hiq:CGSHiGG_09420"/>
<dbReference type="HOGENOM" id="CLU_106757_2_0_6"/>
<dbReference type="Proteomes" id="UP000001990">
    <property type="component" value="Chromosome"/>
</dbReference>
<dbReference type="GO" id="GO:0005829">
    <property type="term" value="C:cytosol"/>
    <property type="evidence" value="ECO:0007669"/>
    <property type="project" value="TreeGrafter"/>
</dbReference>
<dbReference type="GO" id="GO:0043022">
    <property type="term" value="F:ribosome binding"/>
    <property type="evidence" value="ECO:0007669"/>
    <property type="project" value="UniProtKB-UniRule"/>
</dbReference>
<dbReference type="GO" id="GO:0019843">
    <property type="term" value="F:rRNA binding"/>
    <property type="evidence" value="ECO:0007669"/>
    <property type="project" value="UniProtKB-UniRule"/>
</dbReference>
<dbReference type="GO" id="GO:1902626">
    <property type="term" value="P:assembly of large subunit precursor of preribosome"/>
    <property type="evidence" value="ECO:0007669"/>
    <property type="project" value="UniProtKB-UniRule"/>
</dbReference>
<dbReference type="CDD" id="cd16331">
    <property type="entry name" value="YjgA-like"/>
    <property type="match status" value="1"/>
</dbReference>
<dbReference type="FunFam" id="1.10.60.30:FF:000001">
    <property type="entry name" value="UPF0307 protein YjgA"/>
    <property type="match status" value="1"/>
</dbReference>
<dbReference type="FunFam" id="1.10.60.30:FF:000002">
    <property type="entry name" value="UPF0307 protein YjgA"/>
    <property type="match status" value="1"/>
</dbReference>
<dbReference type="Gene3D" id="1.10.60.30">
    <property type="entry name" value="PSPTO4464-like domains"/>
    <property type="match status" value="2"/>
</dbReference>
<dbReference type="HAMAP" id="MF_00765">
    <property type="entry name" value="DarP"/>
    <property type="match status" value="1"/>
</dbReference>
<dbReference type="InterPro" id="IPR006839">
    <property type="entry name" value="DarP"/>
</dbReference>
<dbReference type="InterPro" id="IPR023153">
    <property type="entry name" value="DarP_sf"/>
</dbReference>
<dbReference type="NCBIfam" id="NF003593">
    <property type="entry name" value="PRK05255.1-1"/>
    <property type="match status" value="1"/>
</dbReference>
<dbReference type="PANTHER" id="PTHR38101">
    <property type="entry name" value="UPF0307 PROTEIN YJGA"/>
    <property type="match status" value="1"/>
</dbReference>
<dbReference type="PANTHER" id="PTHR38101:SF1">
    <property type="entry name" value="UPF0307 PROTEIN YJGA"/>
    <property type="match status" value="1"/>
</dbReference>
<dbReference type="Pfam" id="PF04751">
    <property type="entry name" value="DarP"/>
    <property type="match status" value="1"/>
</dbReference>
<dbReference type="PIRSF" id="PIRSF016183">
    <property type="entry name" value="UCP016183"/>
    <property type="match status" value="1"/>
</dbReference>
<dbReference type="SUPFAM" id="SSF158710">
    <property type="entry name" value="PSPTO4464-like"/>
    <property type="match status" value="1"/>
</dbReference>
<organism>
    <name type="scientific">Haemophilus influenzae (strain PittGG)</name>
    <dbReference type="NCBI Taxonomy" id="374931"/>
    <lineage>
        <taxon>Bacteria</taxon>
        <taxon>Pseudomonadati</taxon>
        <taxon>Pseudomonadota</taxon>
        <taxon>Gammaproteobacteria</taxon>
        <taxon>Pasteurellales</taxon>
        <taxon>Pasteurellaceae</taxon>
        <taxon>Haemophilus</taxon>
    </lineage>
</organism>